<gene>
    <name type="ordered locus">PM0457</name>
</gene>
<keyword id="KW-1185">Reference proteome</keyword>
<reference key="1">
    <citation type="journal article" date="2001" name="Proc. Natl. Acad. Sci. U.S.A.">
        <title>Complete genomic sequence of Pasteurella multocida Pm70.</title>
        <authorList>
            <person name="May B.J."/>
            <person name="Zhang Q."/>
            <person name="Li L.L."/>
            <person name="Paustian M.L."/>
            <person name="Whittam T.S."/>
            <person name="Kapur V."/>
        </authorList>
    </citation>
    <scope>NUCLEOTIDE SEQUENCE [LARGE SCALE GENOMIC DNA]</scope>
    <source>
        <strain>Pm70</strain>
    </source>
</reference>
<feature type="chain" id="PRO_0000214652" description="UPF0231 protein PM0457">
    <location>
        <begin position="1"/>
        <end position="118"/>
    </location>
</feature>
<proteinExistence type="inferred from homology"/>
<name>Y457_PASMU</name>
<organism>
    <name type="scientific">Pasteurella multocida (strain Pm70)</name>
    <dbReference type="NCBI Taxonomy" id="272843"/>
    <lineage>
        <taxon>Bacteria</taxon>
        <taxon>Pseudomonadati</taxon>
        <taxon>Pseudomonadota</taxon>
        <taxon>Gammaproteobacteria</taxon>
        <taxon>Pasteurellales</taxon>
        <taxon>Pasteurellaceae</taxon>
        <taxon>Pasteurella</taxon>
    </lineage>
</organism>
<dbReference type="EMBL" id="AE004439">
    <property type="protein sequence ID" value="AAK02541.1"/>
    <property type="molecule type" value="Genomic_DNA"/>
</dbReference>
<dbReference type="RefSeq" id="WP_010906656.1">
    <property type="nucleotide sequence ID" value="NC_002663.1"/>
</dbReference>
<dbReference type="SMR" id="Q9CNH4"/>
<dbReference type="STRING" id="272843.PM0457"/>
<dbReference type="EnsemblBacteria" id="AAK02541">
    <property type="protein sequence ID" value="AAK02541"/>
    <property type="gene ID" value="PM0457"/>
</dbReference>
<dbReference type="KEGG" id="pmu:PM0457"/>
<dbReference type="HOGENOM" id="CLU_139226_0_0_6"/>
<dbReference type="OrthoDB" id="5739292at2"/>
<dbReference type="Proteomes" id="UP000000809">
    <property type="component" value="Chromosome"/>
</dbReference>
<dbReference type="HAMAP" id="MF_01053">
    <property type="entry name" value="UPF0231"/>
    <property type="match status" value="1"/>
</dbReference>
<dbReference type="InterPro" id="IPR008249">
    <property type="entry name" value="UPF0231"/>
</dbReference>
<dbReference type="NCBIfam" id="NF003575">
    <property type="entry name" value="PRK05248.1-2"/>
    <property type="match status" value="1"/>
</dbReference>
<dbReference type="Pfam" id="PF06062">
    <property type="entry name" value="UPF0231"/>
    <property type="match status" value="1"/>
</dbReference>
<dbReference type="PIRSF" id="PIRSF006287">
    <property type="entry name" value="UCP006287"/>
    <property type="match status" value="1"/>
</dbReference>
<sequence length="118" mass="13503">MDFQFTSHLGSIMAKCSMGHEAIANWFNSEVRSDSAKIQTVLQQLQTGKTQQDITLIGTEYSVFINQEEVMVRANNLMLEHDQPLEDDFHYYDEESIAFCGTDDFIHFLQSALAFIQS</sequence>
<protein>
    <recommendedName>
        <fullName evidence="1">UPF0231 protein PM0457</fullName>
    </recommendedName>
</protein>
<accession>Q9CNH4</accession>
<comment type="similarity">
    <text evidence="1">Belongs to the UPF0231 family.</text>
</comment>
<evidence type="ECO:0000255" key="1">
    <source>
        <dbReference type="HAMAP-Rule" id="MF_01053"/>
    </source>
</evidence>